<feature type="chain" id="PRO_0000115947" description="Tripartite terminase subunit 3">
    <location>
        <begin position="1"/>
        <end position="674"/>
    </location>
</feature>
<feature type="region of interest" description="Required for interaction with UL56 and DNA packaging" evidence="2">
    <location>
        <begin position="580"/>
        <end position="600"/>
    </location>
</feature>
<feature type="short sequence motif" description="Walker A motif" evidence="1">
    <location>
        <begin position="212"/>
        <end position="219"/>
    </location>
</feature>
<feature type="short sequence motif" description="Walker B motif" evidence="1">
    <location>
        <begin position="305"/>
        <end position="310"/>
    </location>
</feature>
<feature type="active site" description="For ATPase activity" evidence="1">
    <location>
        <position position="310"/>
    </location>
</feature>
<feature type="active site" description="For nuclease activity" evidence="1">
    <location>
        <position position="463"/>
    </location>
</feature>
<feature type="active site" description="For nuclease activity" evidence="1">
    <location>
        <position position="534"/>
    </location>
</feature>
<feature type="active site" description="For nuclease activity" evidence="1">
    <location>
        <position position="651"/>
    </location>
</feature>
<feature type="helix" evidence="3">
    <location>
        <begin position="432"/>
        <end position="440"/>
    </location>
</feature>
<feature type="strand" evidence="3">
    <location>
        <begin position="441"/>
        <end position="443"/>
    </location>
</feature>
<feature type="helix" evidence="3">
    <location>
        <begin position="445"/>
        <end position="447"/>
    </location>
</feature>
<feature type="helix" evidence="5">
    <location>
        <begin position="448"/>
        <end position="453"/>
    </location>
</feature>
<feature type="strand" evidence="3">
    <location>
        <begin position="457"/>
        <end position="463"/>
    </location>
</feature>
<feature type="strand" evidence="3">
    <location>
        <begin position="468"/>
        <end position="470"/>
    </location>
</feature>
<feature type="strand" evidence="3">
    <location>
        <begin position="475"/>
        <end position="483"/>
    </location>
</feature>
<feature type="strand" evidence="3">
    <location>
        <begin position="486"/>
        <end position="495"/>
    </location>
</feature>
<feature type="helix" evidence="3">
    <location>
        <begin position="504"/>
        <end position="522"/>
    </location>
</feature>
<feature type="strand" evidence="3">
    <location>
        <begin position="528"/>
        <end position="534"/>
    </location>
</feature>
<feature type="helix" evidence="3">
    <location>
        <begin position="539"/>
        <end position="556"/>
    </location>
</feature>
<feature type="strand" evidence="3">
    <location>
        <begin position="560"/>
        <end position="564"/>
    </location>
</feature>
<feature type="strand" evidence="3">
    <location>
        <begin position="566"/>
        <end position="568"/>
    </location>
</feature>
<feature type="turn" evidence="3">
    <location>
        <begin position="569"/>
        <end position="571"/>
    </location>
</feature>
<feature type="strand" evidence="3">
    <location>
        <begin position="572"/>
        <end position="575"/>
    </location>
</feature>
<feature type="helix" evidence="3">
    <location>
        <begin position="582"/>
        <end position="595"/>
    </location>
</feature>
<feature type="strand" evidence="3">
    <location>
        <begin position="599"/>
        <end position="606"/>
    </location>
</feature>
<feature type="strand" evidence="3">
    <location>
        <begin position="608"/>
        <end position="611"/>
    </location>
</feature>
<feature type="strand" evidence="5">
    <location>
        <begin position="612"/>
        <end position="614"/>
    </location>
</feature>
<feature type="helix" evidence="3">
    <location>
        <begin position="616"/>
        <end position="625"/>
    </location>
</feature>
<feature type="helix" evidence="3">
    <location>
        <begin position="651"/>
        <end position="661"/>
    </location>
</feature>
<feature type="helix" evidence="3">
    <location>
        <begin position="665"/>
        <end position="670"/>
    </location>
</feature>
<feature type="strand" evidence="4">
    <location>
        <begin position="671"/>
        <end position="673"/>
    </location>
</feature>
<name>TRM3_HCMVA</name>
<sequence>MLRGDSAAKIQERYAELQKRKSHPTSCISTAFTNVATLCRKRYQMMHPELGLAHSCNEAFLPLMAFCGRHRDYNSPEESQRELLFHERLKSALDKLTFRPCSEEQRASYQKLDALTELYRDPQFQQINNFMTDFKKWLDGGFSTAVEGDAKAIRLEPFQKNLLIHVIFFIAVTKIPVLANRVLQYLIHAFQIDFLSQTSIDIFKQKATVFLVPRRHGKTWFIIPIISFLLKHMIGISIGYVAHQKHVSQFVLKEVEFRCRHTFARDYVVENKDNVISIDHRGAKSTALFASCYNTNSIRGQNFHLLLVDEAHFIKKEAFNTILGFLAQNTTKIIFISSTNTTSDSTCFLTRLNNAPFDMLNVVSYVCEEHLHSFTEKGDATACPCYRLHKPTFISLNSQVRKTANMFMPGAFMDEIIGGTNKISQNTVLITDQSREEFDILRYSTLNTNAYDYFGKTLYVYLDPAFTTNRKASGTGVAAVGAYRHQFLIYGLEHFFLRDLSESSEVAIAECAAHMIISVLSLHPYLDELRIAVEGNTNQAAAVRIACLIRQSVQSSTLIRVLFYHTPDQNHIEQPFYLMGRDKALAVEQFISRFNSGYIKASQELVSYTIKLSHDPIEYLLEQIQNLHRVTLAEGTTARYSAKRQNRISDDLIIAVIMATYLCDDIHAIRFRVS</sequence>
<dbReference type="EC" id="3.1.-.-" evidence="1"/>
<dbReference type="EMBL" id="X17403">
    <property type="protein sequence ID" value="CAA35363.1"/>
    <property type="molecule type" value="Genomic_DNA"/>
</dbReference>
<dbReference type="EMBL" id="BK000394">
    <property type="protein sequence ID" value="DAA00186.1"/>
    <property type="molecule type" value="Genomic_DNA"/>
</dbReference>
<dbReference type="PIR" id="S09853">
    <property type="entry name" value="QQBEI5"/>
</dbReference>
<dbReference type="PDB" id="3N4P">
    <property type="method" value="X-ray"/>
    <property type="resolution" value="2.15 A"/>
    <property type="chains" value="A/B/C/D=418-674"/>
</dbReference>
<dbReference type="PDB" id="3N4Q">
    <property type="method" value="X-ray"/>
    <property type="resolution" value="3.20 A"/>
    <property type="chains" value="A/B/C/D=418-674"/>
</dbReference>
<dbReference type="PDB" id="6EY7">
    <property type="method" value="X-ray"/>
    <property type="resolution" value="2.90 A"/>
    <property type="chains" value="A/B/C/D=400-674"/>
</dbReference>
<dbReference type="PDBsum" id="3N4P"/>
<dbReference type="PDBsum" id="3N4Q"/>
<dbReference type="PDBsum" id="6EY7"/>
<dbReference type="BMRB" id="P16732"/>
<dbReference type="SMR" id="P16732"/>
<dbReference type="BindingDB" id="P16732"/>
<dbReference type="ChEMBL" id="CHEMBL4879551"/>
<dbReference type="EvolutionaryTrace" id="P16732"/>
<dbReference type="Proteomes" id="UP000008991">
    <property type="component" value="Segment"/>
</dbReference>
<dbReference type="Proteomes" id="UP000008992">
    <property type="component" value="Segment"/>
</dbReference>
<dbReference type="GO" id="GO:0042025">
    <property type="term" value="C:host cell nucleus"/>
    <property type="evidence" value="ECO:0007669"/>
    <property type="project" value="UniProtKB-SubCell"/>
</dbReference>
<dbReference type="GO" id="GO:0003677">
    <property type="term" value="F:DNA binding"/>
    <property type="evidence" value="ECO:0007669"/>
    <property type="project" value="UniProtKB-KW"/>
</dbReference>
<dbReference type="GO" id="GO:0016787">
    <property type="term" value="F:hydrolase activity"/>
    <property type="evidence" value="ECO:0007669"/>
    <property type="project" value="UniProtKB-KW"/>
</dbReference>
<dbReference type="GO" id="GO:0051276">
    <property type="term" value="P:chromosome organization"/>
    <property type="evidence" value="ECO:0007669"/>
    <property type="project" value="InterPro"/>
</dbReference>
<dbReference type="Gene3D" id="3.30.420.320">
    <property type="match status" value="1"/>
</dbReference>
<dbReference type="Gene3D" id="3.40.50.300">
    <property type="entry name" value="P-loop containing nucleotide triphosphate hydrolases"/>
    <property type="match status" value="1"/>
</dbReference>
<dbReference type="HAMAP" id="MF_04013">
    <property type="entry name" value="HSV_TRM3"/>
    <property type="match status" value="1"/>
</dbReference>
<dbReference type="InterPro" id="IPR003498">
    <property type="entry name" value="DNA_pack_C"/>
</dbReference>
<dbReference type="InterPro" id="IPR038435">
    <property type="entry name" value="DNA_pack_C_sf"/>
</dbReference>
<dbReference type="InterPro" id="IPR003499">
    <property type="entry name" value="DNA_pack_N"/>
</dbReference>
<dbReference type="InterPro" id="IPR033663">
    <property type="entry name" value="HSV_TRM3"/>
</dbReference>
<dbReference type="InterPro" id="IPR027417">
    <property type="entry name" value="P-loop_NTPase"/>
</dbReference>
<dbReference type="Pfam" id="PF02499">
    <property type="entry name" value="DNA_pack_C"/>
    <property type="match status" value="1"/>
</dbReference>
<dbReference type="Pfam" id="PF02500">
    <property type="entry name" value="DNA_pack_N"/>
    <property type="match status" value="1"/>
</dbReference>
<dbReference type="SUPFAM" id="SSF52540">
    <property type="entry name" value="P-loop containing nucleoside triphosphate hydrolases"/>
    <property type="match status" value="1"/>
</dbReference>
<organismHost>
    <name type="scientific">Homo sapiens</name>
    <name type="common">Human</name>
    <dbReference type="NCBI Taxonomy" id="9606"/>
</organismHost>
<proteinExistence type="evidence at protein level"/>
<keyword id="KW-0002">3D-structure</keyword>
<keyword id="KW-0238">DNA-binding</keyword>
<keyword id="KW-1048">Host nucleus</keyword>
<keyword id="KW-0378">Hydrolase</keyword>
<keyword id="KW-1185">Reference proteome</keyword>
<keyword id="KW-0231">Viral genome packaging</keyword>
<keyword id="KW-1188">Viral release from host cell</keyword>
<gene>
    <name evidence="1" type="primary">TRM3</name>
    <name type="ordered locus">UL89</name>
</gene>
<reference key="1">
    <citation type="journal article" date="1990" name="Curr. Top. Microbiol. Immunol.">
        <title>Analysis of the protein-coding content of the sequence of human cytomegalovirus strain AD169.</title>
        <authorList>
            <person name="Chee M.S."/>
            <person name="Bankier A.T."/>
            <person name="Beck S."/>
            <person name="Bohni R."/>
            <person name="Brown C.M."/>
            <person name="Cerny R."/>
            <person name="Horsnell T."/>
            <person name="Hutchison C.A. III"/>
            <person name="Kouzarides T."/>
            <person name="Martignetti J.A."/>
            <person name="Preddie E."/>
            <person name="Satchwell S.C."/>
            <person name="Tomlinson P."/>
            <person name="Weston K.M."/>
            <person name="Barrell B.G."/>
        </authorList>
    </citation>
    <scope>NUCLEOTIDE SEQUENCE [LARGE SCALE GENOMIC DNA]</scope>
</reference>
<reference key="2">
    <citation type="journal article" date="2003" name="J. Gen. Virol.">
        <title>The human cytomegalovirus genome revisited: comparison with the chimpanzee cytomegalovirus genome.</title>
        <authorList>
            <person name="Davison A.J."/>
            <person name="Dolan A."/>
            <person name="Akter P."/>
            <person name="Addison C."/>
            <person name="Dargan D.J."/>
            <person name="Alcendor D.J."/>
            <person name="McGeoch D.J."/>
            <person name="Hayward G.S."/>
        </authorList>
    </citation>
    <scope>GENOME REANNOTATION</scope>
</reference>
<reference key="3">
    <citation type="journal article" date="2003" name="J. Gen. Virol.">
        <authorList>
            <person name="Davison A.J."/>
            <person name="Dolan A."/>
            <person name="Akter P."/>
            <person name="Addison C."/>
            <person name="Dargan D.J."/>
            <person name="Alcendor D.J."/>
            <person name="McGeoch D.J."/>
            <person name="Hayward G.S."/>
        </authorList>
    </citation>
    <scope>ERRATUM OF PUBMED:12533697</scope>
</reference>
<reference key="4">
    <citation type="journal article" date="2004" name="J. Virol.">
        <title>Identification of proteins in human cytomegalovirus (HCMV) particles: the HCMV proteome.</title>
        <authorList>
            <person name="Varnum S.M."/>
            <person name="Streblow D.N."/>
            <person name="Monroe M.E."/>
            <person name="Smith P."/>
            <person name="Auberry K.J."/>
            <person name="Pasa-Tolic L."/>
            <person name="Wang D."/>
            <person name="Camp D.G. II"/>
            <person name="Rodland K."/>
            <person name="Wiley S."/>
            <person name="Britt W."/>
            <person name="Shenk T."/>
            <person name="Smith R.D."/>
            <person name="Nelson J.A."/>
        </authorList>
    </citation>
    <scope>IDENTIFICATION</scope>
</reference>
<reference key="5">
    <citation type="journal article" date="2004" name="J. Virol.">
        <authorList>
            <person name="Varnum S.M."/>
            <person name="Streblow D.N."/>
            <person name="Monroe M.E."/>
            <person name="Smith P."/>
            <person name="Auberry K.J."/>
            <person name="Pasa-Tolic L."/>
            <person name="Wang D."/>
            <person name="Camp D.G. II"/>
            <person name="Rodland K."/>
            <person name="Wiley S."/>
            <person name="Britt W."/>
            <person name="Shenk T."/>
            <person name="Smith R.D."/>
            <person name="Nelson J.A."/>
        </authorList>
    </citation>
    <scope>ERRATUM OF PUBMED:15452216</scope>
</reference>
<reference key="6">
    <citation type="journal article" date="2006" name="Biochemistry">
        <title>Identification of the interaction domain of the small terminase subunit pUL89 with the large subunit pUL56 of human cytomegalovirus.</title>
        <authorList>
            <person name="Thoma C."/>
            <person name="Borst E."/>
            <person name="Messerle M."/>
            <person name="Rieger M."/>
            <person name="Hwang J.S."/>
            <person name="Bogner E."/>
        </authorList>
    </citation>
    <scope>REGION</scope>
    <scope>INTERACTION WITH UL56</scope>
</reference>
<reference key="7">
    <citation type="journal article" date="2010" name="Proc. Natl. Acad. Sci. U.S.A.">
        <title>Structure and inhibition of herpesvirus DNA packaging terminase nuclease domain.</title>
        <authorList>
            <person name="Nadal M."/>
            <person name="Mas P.J."/>
            <person name="Blanco A.G."/>
            <person name="Arnan C."/>
            <person name="Sola M."/>
            <person name="Hart D.J."/>
            <person name="Coll M."/>
        </authorList>
    </citation>
    <scope>X-RAY CRYSTALLOGRAPHY (2.15 ANGSTROMS) OF 418-674</scope>
</reference>
<comment type="function">
    <text evidence="1">Component of the molecular motor that translocates viral genomic DNA in empty capsid during DNA packaging. Forms a tripartite terminase complex together with TRM1 and TRM2 in the host cytoplasm. Once the complex reaches the host nucleus, it interacts with the capsid portal vertex. This portal forms a ring in which genomic DNA is translocated into the capsid. TRM3 carries an RNase H-like nuclease activity that plays an important role for the cleavage of concatemeric viral DNA into unit length genomes.</text>
</comment>
<comment type="subunit">
    <text evidence="1 2">Interacts with the terminase subunits TRM1 and TRM2. Interacts with portal protein.</text>
</comment>
<comment type="subcellular location">
    <subcellularLocation>
        <location evidence="1">Host nucleus</location>
    </subcellularLocation>
    <text evidence="1">Responsible for the nuclear localization of the two others subunits TRM1 and TRM2.</text>
</comment>
<comment type="similarity">
    <text evidence="1">Belongs to the herpesviridae TRM3 protein family.</text>
</comment>
<evidence type="ECO:0000255" key="1">
    <source>
        <dbReference type="HAMAP-Rule" id="MF_04013"/>
    </source>
</evidence>
<evidence type="ECO:0000269" key="2">
    <source>
    </source>
</evidence>
<evidence type="ECO:0007829" key="3">
    <source>
        <dbReference type="PDB" id="3N4P"/>
    </source>
</evidence>
<evidence type="ECO:0007829" key="4">
    <source>
        <dbReference type="PDB" id="3N4Q"/>
    </source>
</evidence>
<evidence type="ECO:0007829" key="5">
    <source>
        <dbReference type="PDB" id="6EY7"/>
    </source>
</evidence>
<protein>
    <recommendedName>
        <fullName evidence="1">Tripartite terminase subunit 3</fullName>
        <ecNumber evidence="1">3.1.-.-</ecNumber>
    </recommendedName>
    <alternativeName>
        <fullName evidence="1">Terminase large subunit</fullName>
    </alternativeName>
</protein>
<accession>P16732</accession>
<accession>Q7M6K2</accession>
<organism>
    <name type="scientific">Human cytomegalovirus (strain AD169)</name>
    <name type="common">HHV-5</name>
    <name type="synonym">Human herpesvirus 5</name>
    <dbReference type="NCBI Taxonomy" id="10360"/>
    <lineage>
        <taxon>Viruses</taxon>
        <taxon>Duplodnaviria</taxon>
        <taxon>Heunggongvirae</taxon>
        <taxon>Peploviricota</taxon>
        <taxon>Herviviricetes</taxon>
        <taxon>Herpesvirales</taxon>
        <taxon>Orthoherpesviridae</taxon>
        <taxon>Betaherpesvirinae</taxon>
        <taxon>Cytomegalovirus</taxon>
        <taxon>Cytomegalovirus humanbeta5</taxon>
        <taxon>Human cytomegalovirus</taxon>
    </lineage>
</organism>